<keyword id="KW-0067">ATP-binding</keyword>
<keyword id="KW-0963">Cytoplasm</keyword>
<keyword id="KW-0206">Cytoskeleton</keyword>
<keyword id="KW-0378">Hydrolase</keyword>
<keyword id="KW-0547">Nucleotide-binding</keyword>
<keyword id="KW-1185">Reference proteome</keyword>
<evidence type="ECO:0000250" key="1">
    <source>
        <dbReference type="UniProtKB" id="P68137"/>
    </source>
</evidence>
<evidence type="ECO:0000305" key="2"/>
<organism>
    <name type="scientific">Solanum tuberosum</name>
    <name type="common">Potato</name>
    <dbReference type="NCBI Taxonomy" id="4113"/>
    <lineage>
        <taxon>Eukaryota</taxon>
        <taxon>Viridiplantae</taxon>
        <taxon>Streptophyta</taxon>
        <taxon>Embryophyta</taxon>
        <taxon>Tracheophyta</taxon>
        <taxon>Spermatophyta</taxon>
        <taxon>Magnoliopsida</taxon>
        <taxon>eudicotyledons</taxon>
        <taxon>Gunneridae</taxon>
        <taxon>Pentapetalae</taxon>
        <taxon>asterids</taxon>
        <taxon>lamiids</taxon>
        <taxon>Solanales</taxon>
        <taxon>Solanaceae</taxon>
        <taxon>Solanoideae</taxon>
        <taxon>Solaneae</taxon>
        <taxon>Solanum</taxon>
    </lineage>
</organism>
<reference key="1">
    <citation type="journal article" date="1990" name="J. Mol. Evol.">
        <title>Independent gene evolution in the potato actin gene family demonstrated by phylogenetic procedures for resolving gene conversions and the phylogeny of angiosperm actin genes.</title>
        <authorList>
            <person name="Drouin G."/>
            <person name="Dover G.A."/>
        </authorList>
    </citation>
    <scope>NUCLEOTIDE SEQUENCE [GENOMIC DNA]</scope>
    <source>
        <strain>cv. Maris Piper</strain>
        <tissue>Leaf</tissue>
    </source>
</reference>
<sequence length="377" mass="41782">MADVEDIQPLVCDNGTGMVKAGFAGDDAPRAVFPSIVGRPRHAGVMVGMGQKDAYVVDEAQSKRGILTLKYPXEHGIVNNWDDMEKIWHHTFYNELRVAPEEHPVLLTEAPLNPKANREKMTQIMFETFNAPAMYVAIQAVLSLYASGRTTGIVLDSGDGVSHTVPIYEGYALPHAILRLDLAGRDLTEYMVKILTERGYSFTTTAEKEIVRDVKEKLAYLALDFEQELETTKTGSAVEKNYELPDGQVITIGAERFRCPEVLYQPSLIGMEAAGIHETTYNSIMKCDVDIRKDLYGNHVLSGGSTMFPGIADRMSKEIQALAPSSMKIKVVAPPERKYSVWIGGSILASLSTFQQMWIAKAEYDESGPSIVHRKCF</sequence>
<accession>P30168</accession>
<proteinExistence type="inferred from homology"/>
<comment type="function">
    <text>Actins are highly conserved proteins that are involved in various types of cell motility and are ubiquitously expressed in all eukaryotic cells. Essential component of cell cytoskeleton; plays an important role in cytoplasmic streaming, cell shape determination, cell division, organelle movement and extension growth.</text>
</comment>
<comment type="catalytic activity">
    <reaction evidence="1">
        <text>ATP + H2O = ADP + phosphate + H(+)</text>
        <dbReference type="Rhea" id="RHEA:13065"/>
        <dbReference type="ChEBI" id="CHEBI:15377"/>
        <dbReference type="ChEBI" id="CHEBI:15378"/>
        <dbReference type="ChEBI" id="CHEBI:30616"/>
        <dbReference type="ChEBI" id="CHEBI:43474"/>
        <dbReference type="ChEBI" id="CHEBI:456216"/>
    </reaction>
</comment>
<comment type="subcellular location">
    <subcellularLocation>
        <location>Cytoplasm</location>
        <location>Cytoskeleton</location>
    </subcellularLocation>
</comment>
<comment type="miscellaneous">
    <text>There are at least 13 actin genes in potato.</text>
</comment>
<comment type="similarity">
    <text evidence="2">Belongs to the actin family.</text>
</comment>
<dbReference type="EC" id="3.6.4.-" evidence="1"/>
<dbReference type="EMBL" id="X55750">
    <property type="protein sequence ID" value="CAA39279.1"/>
    <property type="molecule type" value="Genomic_DNA"/>
</dbReference>
<dbReference type="PIR" id="S20095">
    <property type="entry name" value="S20095"/>
</dbReference>
<dbReference type="STRING" id="4113.P30168"/>
<dbReference type="PaxDb" id="4113-PGSC0003DMT400023026"/>
<dbReference type="eggNOG" id="KOG0676">
    <property type="taxonomic scope" value="Eukaryota"/>
</dbReference>
<dbReference type="InParanoid" id="P30168"/>
<dbReference type="Proteomes" id="UP000011115">
    <property type="component" value="Unassembled WGS sequence"/>
</dbReference>
<dbReference type="ExpressionAtlas" id="P30168">
    <property type="expression patterns" value="baseline"/>
</dbReference>
<dbReference type="GO" id="GO:0015629">
    <property type="term" value="C:actin cytoskeleton"/>
    <property type="evidence" value="ECO:0000318"/>
    <property type="project" value="GO_Central"/>
</dbReference>
<dbReference type="GO" id="GO:0005829">
    <property type="term" value="C:cytosol"/>
    <property type="evidence" value="ECO:0000318"/>
    <property type="project" value="GO_Central"/>
</dbReference>
<dbReference type="GO" id="GO:0005524">
    <property type="term" value="F:ATP binding"/>
    <property type="evidence" value="ECO:0007669"/>
    <property type="project" value="UniProtKB-KW"/>
</dbReference>
<dbReference type="GO" id="GO:0016787">
    <property type="term" value="F:hydrolase activity"/>
    <property type="evidence" value="ECO:0007669"/>
    <property type="project" value="UniProtKB-KW"/>
</dbReference>
<dbReference type="GO" id="GO:0051301">
    <property type="term" value="P:cell division"/>
    <property type="evidence" value="ECO:0000318"/>
    <property type="project" value="GO_Central"/>
</dbReference>
<dbReference type="CDD" id="cd10224">
    <property type="entry name" value="ASKHA_NBD_actin"/>
    <property type="match status" value="1"/>
</dbReference>
<dbReference type="FunFam" id="3.30.420.40:FF:000291">
    <property type="entry name" value="Actin, alpha skeletal muscle"/>
    <property type="match status" value="1"/>
</dbReference>
<dbReference type="FunFam" id="3.90.640.10:FF:000001">
    <property type="entry name" value="Actin, muscle"/>
    <property type="match status" value="1"/>
</dbReference>
<dbReference type="FunFam" id="3.30.420.40:FF:000404">
    <property type="entry name" value="Major actin"/>
    <property type="match status" value="1"/>
</dbReference>
<dbReference type="FunFam" id="3.30.420.40:FF:000058">
    <property type="entry name" value="Putative actin-related protein 5"/>
    <property type="match status" value="1"/>
</dbReference>
<dbReference type="Gene3D" id="3.30.420.40">
    <property type="match status" value="2"/>
</dbReference>
<dbReference type="Gene3D" id="3.90.640.10">
    <property type="entry name" value="Actin, Chain A, domain 4"/>
    <property type="match status" value="1"/>
</dbReference>
<dbReference type="InterPro" id="IPR004000">
    <property type="entry name" value="Actin"/>
</dbReference>
<dbReference type="InterPro" id="IPR020902">
    <property type="entry name" value="Actin/actin-like_CS"/>
</dbReference>
<dbReference type="InterPro" id="IPR004001">
    <property type="entry name" value="Actin_CS"/>
</dbReference>
<dbReference type="InterPro" id="IPR043129">
    <property type="entry name" value="ATPase_NBD"/>
</dbReference>
<dbReference type="PANTHER" id="PTHR11937">
    <property type="entry name" value="ACTIN"/>
    <property type="match status" value="1"/>
</dbReference>
<dbReference type="Pfam" id="PF00022">
    <property type="entry name" value="Actin"/>
    <property type="match status" value="1"/>
</dbReference>
<dbReference type="PRINTS" id="PR00190">
    <property type="entry name" value="ACTIN"/>
</dbReference>
<dbReference type="SMART" id="SM00268">
    <property type="entry name" value="ACTIN"/>
    <property type="match status" value="1"/>
</dbReference>
<dbReference type="SUPFAM" id="SSF53067">
    <property type="entry name" value="Actin-like ATPase domain"/>
    <property type="match status" value="2"/>
</dbReference>
<dbReference type="PROSITE" id="PS00406">
    <property type="entry name" value="ACTINS_1"/>
    <property type="match status" value="1"/>
</dbReference>
<dbReference type="PROSITE" id="PS00432">
    <property type="entry name" value="ACTINS_2"/>
    <property type="match status" value="1"/>
</dbReference>
<dbReference type="PROSITE" id="PS01132">
    <property type="entry name" value="ACTINS_ACT_LIKE"/>
    <property type="match status" value="1"/>
</dbReference>
<name>ACT6_SOLTU</name>
<gene>
    <name type="primary">AC71</name>
</gene>
<feature type="chain" id="PRO_0000089013" description="Actin-71">
    <location>
        <begin position="1"/>
        <end position="377"/>
    </location>
</feature>
<protein>
    <recommendedName>
        <fullName>Actin-71</fullName>
        <ecNumber evidence="1">3.6.4.-</ecNumber>
    </recommendedName>
</protein>